<feature type="chain" id="PRO_0000457053" description="Uncharacterized protein C8orf90">
    <location>
        <begin position="1"/>
        <end position="192"/>
    </location>
</feature>
<feature type="region of interest" description="Disordered" evidence="1">
    <location>
        <begin position="1"/>
        <end position="37"/>
    </location>
</feature>
<feature type="region of interest" description="Disordered" evidence="1">
    <location>
        <begin position="146"/>
        <end position="192"/>
    </location>
</feature>
<feature type="compositionally biased region" description="Pro residues" evidence="1">
    <location>
        <begin position="8"/>
        <end position="19"/>
    </location>
</feature>
<feature type="compositionally biased region" description="Pro residues" evidence="1">
    <location>
        <begin position="159"/>
        <end position="180"/>
    </location>
</feature>
<name>CHO90_HUMAN</name>
<organism>
    <name type="scientific">Homo sapiens</name>
    <name type="common">Human</name>
    <dbReference type="NCBI Taxonomy" id="9606"/>
    <lineage>
        <taxon>Eukaryota</taxon>
        <taxon>Metazoa</taxon>
        <taxon>Chordata</taxon>
        <taxon>Craniata</taxon>
        <taxon>Vertebrata</taxon>
        <taxon>Euteleostomi</taxon>
        <taxon>Mammalia</taxon>
        <taxon>Eutheria</taxon>
        <taxon>Euarchontoglires</taxon>
        <taxon>Primates</taxon>
        <taxon>Haplorrhini</taxon>
        <taxon>Catarrhini</taxon>
        <taxon>Hominidae</taxon>
        <taxon>Homo</taxon>
    </lineage>
</organism>
<dbReference type="EMBL" id="AC138647">
    <property type="status" value="NOT_ANNOTATED_CDS"/>
    <property type="molecule type" value="Genomic_DNA"/>
</dbReference>
<dbReference type="CCDS" id="CCDS94348.1"/>
<dbReference type="RefSeq" id="NP_001382889.1">
    <property type="nucleotide sequence ID" value="NM_001395960.1"/>
</dbReference>
<dbReference type="GlyGen" id="A0A2R8Y2Y2">
    <property type="glycosylation" value="2 sites"/>
</dbReference>
<dbReference type="MassIVE" id="A0A2R8Y2Y2"/>
<dbReference type="Ensembl" id="ENST00000643770.2">
    <property type="protein sequence ID" value="ENSP00000493548.1"/>
    <property type="gene ID" value="ENSG00000226490.2"/>
</dbReference>
<dbReference type="Ensembl" id="ENST00000707629.1">
    <property type="protein sequence ID" value="ENSP00000516937.1"/>
    <property type="gene ID" value="ENSG00000291474.1"/>
</dbReference>
<dbReference type="GeneID" id="122455339"/>
<dbReference type="MANE-Select" id="ENST00000643770.2">
    <property type="protein sequence ID" value="ENSP00000493548.1"/>
    <property type="RefSeq nucleotide sequence ID" value="NM_001395960.1"/>
    <property type="RefSeq protein sequence ID" value="NP_001382889.1"/>
</dbReference>
<dbReference type="AGR" id="HGNC:56305"/>
<dbReference type="GeneCards" id="C8orf90"/>
<dbReference type="HGNC" id="HGNC:56305">
    <property type="gene designation" value="C8orf90"/>
</dbReference>
<dbReference type="OpenTargets" id="ENSG00000226490"/>
<dbReference type="VEuPathDB" id="HostDB:ENSG00000226490"/>
<dbReference type="GeneTree" id="ENSGT00570000080880"/>
<dbReference type="InParanoid" id="A0A2R8Y2Y2"/>
<dbReference type="OrthoDB" id="9045373at2759"/>
<dbReference type="PAN-GO" id="A0A2R8Y2Y2">
    <property type="GO annotations" value="0 GO annotations based on evolutionary models"/>
</dbReference>
<dbReference type="PRO" id="PR:A0A2R8Y2Y2"/>
<dbReference type="Proteomes" id="UP000005640">
    <property type="component" value="Chromosome 8"/>
</dbReference>
<dbReference type="Bgee" id="ENSG00000226490">
    <property type="expression patterns" value="Expressed in left testis and 26 other cell types or tissues"/>
</dbReference>
<dbReference type="ExpressionAtlas" id="A0A2R8Y2Y2">
    <property type="expression patterns" value="baseline and differential"/>
</dbReference>
<proteinExistence type="predicted"/>
<accession>A0A2R8Y2Y2</accession>
<keyword id="KW-1185">Reference proteome</keyword>
<gene>
    <name evidence="3" type="primary">C8orf90</name>
</gene>
<evidence type="ECO:0000256" key="1">
    <source>
        <dbReference type="SAM" id="MobiDB-lite"/>
    </source>
</evidence>
<evidence type="ECO:0000305" key="2"/>
<evidence type="ECO:0000312" key="3">
    <source>
        <dbReference type="HGNC" id="HGNC:56305"/>
    </source>
</evidence>
<sequence>MASSCPGTPSPAGLPPPSVATPGETLGPAAPPEPAFPDIYGGDAQLWEAHFRGIGRAYRALGKQDDFAIRVLTENFTLPFPFAWPPGSDPACGPLFYDPRDRADFDFLLRGPGASPPALLRPLHATAQAAMRKRRLERLALSCARARGPGPASSCCCPAPPPPSRSPRPALPATAPPGWPRPRRCPESEQNK</sequence>
<reference key="1">
    <citation type="journal article" date="2006" name="Nature">
        <title>DNA sequence and analysis of human chromosome 8.</title>
        <authorList>
            <person name="Nusbaum C."/>
            <person name="Mikkelsen T.S."/>
            <person name="Zody M.C."/>
            <person name="Asakawa S."/>
            <person name="Taudien S."/>
            <person name="Garber M."/>
            <person name="Kodira C.D."/>
            <person name="Schueler M.G."/>
            <person name="Shimizu A."/>
            <person name="Whittaker C.A."/>
            <person name="Chang J.L."/>
            <person name="Cuomo C.A."/>
            <person name="Dewar K."/>
            <person name="FitzGerald M.G."/>
            <person name="Yang X."/>
            <person name="Allen N.R."/>
            <person name="Anderson S."/>
            <person name="Asakawa T."/>
            <person name="Blechschmidt K."/>
            <person name="Bloom T."/>
            <person name="Borowsky M.L."/>
            <person name="Butler J."/>
            <person name="Cook A."/>
            <person name="Corum B."/>
            <person name="DeArellano K."/>
            <person name="DeCaprio D."/>
            <person name="Dooley K.T."/>
            <person name="Dorris L. III"/>
            <person name="Engels R."/>
            <person name="Gloeckner G."/>
            <person name="Hafez N."/>
            <person name="Hagopian D.S."/>
            <person name="Hall J.L."/>
            <person name="Ishikawa S.K."/>
            <person name="Jaffe D.B."/>
            <person name="Kamat A."/>
            <person name="Kudoh J."/>
            <person name="Lehmann R."/>
            <person name="Lokitsang T."/>
            <person name="Macdonald P."/>
            <person name="Major J.E."/>
            <person name="Matthews C.D."/>
            <person name="Mauceli E."/>
            <person name="Menzel U."/>
            <person name="Mihalev A.H."/>
            <person name="Minoshima S."/>
            <person name="Murayama Y."/>
            <person name="Naylor J.W."/>
            <person name="Nicol R."/>
            <person name="Nguyen C."/>
            <person name="O'Leary S.B."/>
            <person name="O'Neill K."/>
            <person name="Parker S.C.J."/>
            <person name="Polley A."/>
            <person name="Raymond C.K."/>
            <person name="Reichwald K."/>
            <person name="Rodriguez J."/>
            <person name="Sasaki T."/>
            <person name="Schilhabel M."/>
            <person name="Siddiqui R."/>
            <person name="Smith C.L."/>
            <person name="Sneddon T.P."/>
            <person name="Talamas J.A."/>
            <person name="Tenzin P."/>
            <person name="Topham K."/>
            <person name="Venkataraman V."/>
            <person name="Wen G."/>
            <person name="Yamazaki S."/>
            <person name="Young S.K."/>
            <person name="Zeng Q."/>
            <person name="Zimmer A.R."/>
            <person name="Rosenthal A."/>
            <person name="Birren B.W."/>
            <person name="Platzer M."/>
            <person name="Shimizu N."/>
            <person name="Lander E.S."/>
        </authorList>
    </citation>
    <scope>NUCLEOTIDE SEQUENCE [LARGE SCALE GENOMIC DNA]</scope>
</reference>
<protein>
    <recommendedName>
        <fullName evidence="2">Uncharacterized protein C8orf90</fullName>
    </recommendedName>
</protein>